<protein>
    <recommendedName>
        <fullName>Protein FAM114A2</fullName>
    </recommendedName>
</protein>
<dbReference type="EMBL" id="AF159700">
    <property type="protein sequence ID" value="AAF76523.1"/>
    <property type="molecule type" value="mRNA"/>
</dbReference>
<dbReference type="EMBL" id="AK024664">
    <property type="protein sequence ID" value="BAB14952.1"/>
    <property type="molecule type" value="mRNA"/>
</dbReference>
<dbReference type="EMBL" id="AK313331">
    <property type="protein sequence ID" value="BAG36135.1"/>
    <property type="molecule type" value="mRNA"/>
</dbReference>
<dbReference type="EMBL" id="AC010232">
    <property type="status" value="NOT_ANNOTATED_CDS"/>
    <property type="molecule type" value="Genomic_DNA"/>
</dbReference>
<dbReference type="EMBL" id="CH471062">
    <property type="protein sequence ID" value="EAW61646.1"/>
    <property type="molecule type" value="Genomic_DNA"/>
</dbReference>
<dbReference type="EMBL" id="CH471062">
    <property type="protein sequence ID" value="EAW61647.1"/>
    <property type="molecule type" value="Genomic_DNA"/>
</dbReference>
<dbReference type="EMBL" id="CH471062">
    <property type="protein sequence ID" value="EAW61648.1"/>
    <property type="molecule type" value="Genomic_DNA"/>
</dbReference>
<dbReference type="EMBL" id="BC011414">
    <property type="protein sequence ID" value="AAH11414.1"/>
    <property type="molecule type" value="mRNA"/>
</dbReference>
<dbReference type="CCDS" id="CCDS4323.1"/>
<dbReference type="RefSeq" id="NP_001304922.1">
    <property type="nucleotide sequence ID" value="NM_001317993.2"/>
</dbReference>
<dbReference type="RefSeq" id="NP_001304923.1">
    <property type="nucleotide sequence ID" value="NM_001317994.2"/>
</dbReference>
<dbReference type="RefSeq" id="NP_001304924.1">
    <property type="nucleotide sequence ID" value="NM_001317995.1"/>
</dbReference>
<dbReference type="RefSeq" id="NP_061161.2">
    <property type="nucleotide sequence ID" value="NM_018691.4"/>
</dbReference>
<dbReference type="RefSeq" id="XP_005268417.1">
    <property type="nucleotide sequence ID" value="XM_005268360.6"/>
</dbReference>
<dbReference type="RefSeq" id="XP_005268418.1">
    <property type="nucleotide sequence ID" value="XM_005268361.6"/>
</dbReference>
<dbReference type="RefSeq" id="XP_011535842.1">
    <property type="nucleotide sequence ID" value="XM_011537540.4"/>
</dbReference>
<dbReference type="RefSeq" id="XP_011535843.1">
    <property type="nucleotide sequence ID" value="XM_011537541.2"/>
</dbReference>
<dbReference type="RefSeq" id="XP_011535844.1">
    <property type="nucleotide sequence ID" value="XM_011537542.4"/>
</dbReference>
<dbReference type="RefSeq" id="XP_016864456.1">
    <property type="nucleotide sequence ID" value="XM_017008967.3"/>
</dbReference>
<dbReference type="RefSeq" id="XP_016864457.1">
    <property type="nucleotide sequence ID" value="XM_017008968.1"/>
</dbReference>
<dbReference type="RefSeq" id="XP_047272611.1">
    <property type="nucleotide sequence ID" value="XM_047416655.1"/>
</dbReference>
<dbReference type="RefSeq" id="XP_047272612.1">
    <property type="nucleotide sequence ID" value="XM_047416656.1"/>
</dbReference>
<dbReference type="RefSeq" id="XP_047272613.1">
    <property type="nucleotide sequence ID" value="XM_047416657.1"/>
</dbReference>
<dbReference type="RefSeq" id="XP_047272614.1">
    <property type="nucleotide sequence ID" value="XM_047416658.1"/>
</dbReference>
<dbReference type="RefSeq" id="XP_054207457.1">
    <property type="nucleotide sequence ID" value="XM_054351482.1"/>
</dbReference>
<dbReference type="RefSeq" id="XP_054207458.1">
    <property type="nucleotide sequence ID" value="XM_054351483.1"/>
</dbReference>
<dbReference type="RefSeq" id="XP_054207459.1">
    <property type="nucleotide sequence ID" value="XM_054351484.1"/>
</dbReference>
<dbReference type="RefSeq" id="XP_054207460.1">
    <property type="nucleotide sequence ID" value="XM_054351485.1"/>
</dbReference>
<dbReference type="RefSeq" id="XP_054207461.1">
    <property type="nucleotide sequence ID" value="XM_054351486.1"/>
</dbReference>
<dbReference type="RefSeq" id="XP_054207462.1">
    <property type="nucleotide sequence ID" value="XM_054351487.1"/>
</dbReference>
<dbReference type="RefSeq" id="XP_054207463.1">
    <property type="nucleotide sequence ID" value="XM_054351488.1"/>
</dbReference>
<dbReference type="RefSeq" id="XP_054207464.1">
    <property type="nucleotide sequence ID" value="XM_054351489.1"/>
</dbReference>
<dbReference type="RefSeq" id="XP_054207465.1">
    <property type="nucleotide sequence ID" value="XM_054351490.1"/>
</dbReference>
<dbReference type="SMR" id="Q9NRY5"/>
<dbReference type="BioGRID" id="116040">
    <property type="interactions" value="91"/>
</dbReference>
<dbReference type="FunCoup" id="Q9NRY5">
    <property type="interactions" value="627"/>
</dbReference>
<dbReference type="IntAct" id="Q9NRY5">
    <property type="interactions" value="50"/>
</dbReference>
<dbReference type="MINT" id="Q9NRY5"/>
<dbReference type="STRING" id="9606.ENSP00000341597"/>
<dbReference type="GlyGen" id="Q9NRY5">
    <property type="glycosylation" value="2 sites, 1 N-linked glycan (1 site), 1 O-linked glycan (1 site)"/>
</dbReference>
<dbReference type="iPTMnet" id="Q9NRY5"/>
<dbReference type="PhosphoSitePlus" id="Q9NRY5"/>
<dbReference type="SwissPalm" id="Q9NRY5"/>
<dbReference type="BioMuta" id="FAM114A2"/>
<dbReference type="DMDM" id="296439475"/>
<dbReference type="REPRODUCTION-2DPAGE" id="IPI00329662"/>
<dbReference type="jPOST" id="Q9NRY5"/>
<dbReference type="MassIVE" id="Q9NRY5"/>
<dbReference type="PaxDb" id="9606-ENSP00000341597"/>
<dbReference type="PeptideAtlas" id="Q9NRY5"/>
<dbReference type="ProteomicsDB" id="82443"/>
<dbReference type="Pumba" id="Q9NRY5"/>
<dbReference type="Antibodypedia" id="48470">
    <property type="antibodies" value="65 antibodies from 15 providers"/>
</dbReference>
<dbReference type="DNASU" id="10827"/>
<dbReference type="Ensembl" id="ENST00000351797.9">
    <property type="protein sequence ID" value="ENSP00000341597.4"/>
    <property type="gene ID" value="ENSG00000055147.19"/>
</dbReference>
<dbReference type="Ensembl" id="ENST00000520667.5">
    <property type="protein sequence ID" value="ENSP00000430384.1"/>
    <property type="gene ID" value="ENSG00000055147.19"/>
</dbReference>
<dbReference type="Ensembl" id="ENST00000522858.5">
    <property type="protein sequence ID" value="ENSP00000430489.1"/>
    <property type="gene ID" value="ENSG00000055147.19"/>
</dbReference>
<dbReference type="GeneID" id="10827"/>
<dbReference type="KEGG" id="hsa:10827"/>
<dbReference type="MANE-Select" id="ENST00000351797.9">
    <property type="protein sequence ID" value="ENSP00000341597.4"/>
    <property type="RefSeq nucleotide sequence ID" value="NM_018691.4"/>
    <property type="RefSeq protein sequence ID" value="NP_061161.2"/>
</dbReference>
<dbReference type="UCSC" id="uc003lvb.5">
    <property type="organism name" value="human"/>
</dbReference>
<dbReference type="AGR" id="HGNC:1333"/>
<dbReference type="CTD" id="10827"/>
<dbReference type="DisGeNET" id="10827"/>
<dbReference type="GeneCards" id="FAM114A2"/>
<dbReference type="HGNC" id="HGNC:1333">
    <property type="gene designation" value="FAM114A2"/>
</dbReference>
<dbReference type="HPA" id="ENSG00000055147">
    <property type="expression patterns" value="Low tissue specificity"/>
</dbReference>
<dbReference type="neXtProt" id="NX_Q9NRY5"/>
<dbReference type="OpenTargets" id="ENSG00000055147"/>
<dbReference type="PharmGKB" id="PA162385716"/>
<dbReference type="VEuPathDB" id="HostDB:ENSG00000055147"/>
<dbReference type="eggNOG" id="ENOG502QS74">
    <property type="taxonomic scope" value="Eukaryota"/>
</dbReference>
<dbReference type="GeneTree" id="ENSGT00390000010054"/>
<dbReference type="InParanoid" id="Q9NRY5"/>
<dbReference type="OMA" id="NTFFAEM"/>
<dbReference type="OrthoDB" id="5597648at2759"/>
<dbReference type="PAN-GO" id="Q9NRY5">
    <property type="GO annotations" value="0 GO annotations based on evolutionary models"/>
</dbReference>
<dbReference type="PhylomeDB" id="Q9NRY5"/>
<dbReference type="TreeFam" id="TF324360"/>
<dbReference type="PathwayCommons" id="Q9NRY5"/>
<dbReference type="Reactome" id="R-HSA-6802952">
    <property type="pathway name" value="Signaling by BRAF and RAF1 fusions"/>
</dbReference>
<dbReference type="SignaLink" id="Q9NRY5"/>
<dbReference type="BioGRID-ORCS" id="10827">
    <property type="hits" value="8 hits in 1162 CRISPR screens"/>
</dbReference>
<dbReference type="ChiTaRS" id="FAM114A2">
    <property type="organism name" value="human"/>
</dbReference>
<dbReference type="GeneWiki" id="C5orf3"/>
<dbReference type="GenomeRNAi" id="10827"/>
<dbReference type="Pharos" id="Q9NRY5">
    <property type="development level" value="Tdark"/>
</dbReference>
<dbReference type="PRO" id="PR:Q9NRY5"/>
<dbReference type="Proteomes" id="UP000005640">
    <property type="component" value="Chromosome 5"/>
</dbReference>
<dbReference type="RNAct" id="Q9NRY5">
    <property type="molecule type" value="protein"/>
</dbReference>
<dbReference type="Bgee" id="ENSG00000055147">
    <property type="expression patterns" value="Expressed in colonic epithelium and 190 other cell types or tissues"/>
</dbReference>
<dbReference type="ExpressionAtlas" id="Q9NRY5">
    <property type="expression patterns" value="baseline and differential"/>
</dbReference>
<dbReference type="GO" id="GO:0017076">
    <property type="term" value="F:purine nucleotide binding"/>
    <property type="evidence" value="ECO:0000303"/>
    <property type="project" value="UniProtKB"/>
</dbReference>
<dbReference type="InterPro" id="IPR007998">
    <property type="entry name" value="DUF719"/>
</dbReference>
<dbReference type="PANTHER" id="PTHR12842">
    <property type="entry name" value="FI01459P"/>
    <property type="match status" value="1"/>
</dbReference>
<dbReference type="PANTHER" id="PTHR12842:SF3">
    <property type="entry name" value="PROTEIN FAM114A2"/>
    <property type="match status" value="1"/>
</dbReference>
<dbReference type="Pfam" id="PF05334">
    <property type="entry name" value="DUF719"/>
    <property type="match status" value="1"/>
</dbReference>
<sequence length="505" mass="55468">MSDKDDIETPLLTEAAPILEDGNCEPAKNSESVDQGAKPESKSEPVVSTRKRPETKPSSDLETSKVLPIQDNVSKDVPQTRWGYWGSWGKSILSSASATVATVGQGISNVIEKAETSLGIPGPSEISTEVKYVAGETNAKENENSSPVAGAFGVFSTISTAVQSTGKSVISGGLDALEFIGKKTMDVIAEGDPGFKRTKGLMNRNATLSQVLREAKEKEEIRTSNEVTVETDKKTHYGLLFDEFQGLSHLEALEMLSQESEIKVKSILNSLSGEELETLKVELEQLKETFSLAEFCEEEEEEKKGDEDFTKDITELFSQLHVSSKPEKLARARNTAHEWIRKSLTKPLAENEEGEKQSEAENTEQVNKNSIEDIHAFAIRSLAELTACSIELFHKTAALVLHGRKQEVTAIERSQTLSQMTIVLCKELSSLSKEFTTCLTTAGVKEMADVLNPLITAVFLEASNSASYIQDAFQLLLPVLEISLIENKIESHRHELQGQKPLLEH</sequence>
<name>F1142_HUMAN</name>
<proteinExistence type="evidence at protein level"/>
<reference key="1">
    <citation type="journal article" date="2000" name="Genomics">
        <title>Transcription mapping of the 5q- syndrome critical region: cloning of two novel genes and sequencing, expression, and mapping of a further six novel cDNAs.</title>
        <authorList>
            <person name="Boultwood J."/>
            <person name="Fidler C."/>
            <person name="Strickson A.J."/>
            <person name="Watkins F."/>
            <person name="Kostrzewa M."/>
            <person name="Jaju R.J."/>
            <person name="Muller U."/>
            <person name="Wainscoat J.S."/>
        </authorList>
    </citation>
    <scope>NUCLEOTIDE SEQUENCE [MRNA]</scope>
    <source>
        <tissue>Liver</tissue>
    </source>
</reference>
<reference key="2">
    <citation type="journal article" date="2004" name="Nat. Genet.">
        <title>Complete sequencing and characterization of 21,243 full-length human cDNAs.</title>
        <authorList>
            <person name="Ota T."/>
            <person name="Suzuki Y."/>
            <person name="Nishikawa T."/>
            <person name="Otsuki T."/>
            <person name="Sugiyama T."/>
            <person name="Irie R."/>
            <person name="Wakamatsu A."/>
            <person name="Hayashi K."/>
            <person name="Sato H."/>
            <person name="Nagai K."/>
            <person name="Kimura K."/>
            <person name="Makita H."/>
            <person name="Sekine M."/>
            <person name="Obayashi M."/>
            <person name="Nishi T."/>
            <person name="Shibahara T."/>
            <person name="Tanaka T."/>
            <person name="Ishii S."/>
            <person name="Yamamoto J."/>
            <person name="Saito K."/>
            <person name="Kawai Y."/>
            <person name="Isono Y."/>
            <person name="Nakamura Y."/>
            <person name="Nagahari K."/>
            <person name="Murakami K."/>
            <person name="Yasuda T."/>
            <person name="Iwayanagi T."/>
            <person name="Wagatsuma M."/>
            <person name="Shiratori A."/>
            <person name="Sudo H."/>
            <person name="Hosoiri T."/>
            <person name="Kaku Y."/>
            <person name="Kodaira H."/>
            <person name="Kondo H."/>
            <person name="Sugawara M."/>
            <person name="Takahashi M."/>
            <person name="Kanda K."/>
            <person name="Yokoi T."/>
            <person name="Furuya T."/>
            <person name="Kikkawa E."/>
            <person name="Omura Y."/>
            <person name="Abe K."/>
            <person name="Kamihara K."/>
            <person name="Katsuta N."/>
            <person name="Sato K."/>
            <person name="Tanikawa M."/>
            <person name="Yamazaki M."/>
            <person name="Ninomiya K."/>
            <person name="Ishibashi T."/>
            <person name="Yamashita H."/>
            <person name="Murakawa K."/>
            <person name="Fujimori K."/>
            <person name="Tanai H."/>
            <person name="Kimata M."/>
            <person name="Watanabe M."/>
            <person name="Hiraoka S."/>
            <person name="Chiba Y."/>
            <person name="Ishida S."/>
            <person name="Ono Y."/>
            <person name="Takiguchi S."/>
            <person name="Watanabe S."/>
            <person name="Yosida M."/>
            <person name="Hotuta T."/>
            <person name="Kusano J."/>
            <person name="Kanehori K."/>
            <person name="Takahashi-Fujii A."/>
            <person name="Hara H."/>
            <person name="Tanase T.-O."/>
            <person name="Nomura Y."/>
            <person name="Togiya S."/>
            <person name="Komai F."/>
            <person name="Hara R."/>
            <person name="Takeuchi K."/>
            <person name="Arita M."/>
            <person name="Imose N."/>
            <person name="Musashino K."/>
            <person name="Yuuki H."/>
            <person name="Oshima A."/>
            <person name="Sasaki N."/>
            <person name="Aotsuka S."/>
            <person name="Yoshikawa Y."/>
            <person name="Matsunawa H."/>
            <person name="Ichihara T."/>
            <person name="Shiohata N."/>
            <person name="Sano S."/>
            <person name="Moriya S."/>
            <person name="Momiyama H."/>
            <person name="Satoh N."/>
            <person name="Takami S."/>
            <person name="Terashima Y."/>
            <person name="Suzuki O."/>
            <person name="Nakagawa S."/>
            <person name="Senoh A."/>
            <person name="Mizoguchi H."/>
            <person name="Goto Y."/>
            <person name="Shimizu F."/>
            <person name="Wakebe H."/>
            <person name="Hishigaki H."/>
            <person name="Watanabe T."/>
            <person name="Sugiyama A."/>
            <person name="Takemoto M."/>
            <person name="Kawakami B."/>
            <person name="Yamazaki M."/>
            <person name="Watanabe K."/>
            <person name="Kumagai A."/>
            <person name="Itakura S."/>
            <person name="Fukuzumi Y."/>
            <person name="Fujimori Y."/>
            <person name="Komiyama M."/>
            <person name="Tashiro H."/>
            <person name="Tanigami A."/>
            <person name="Fujiwara T."/>
            <person name="Ono T."/>
            <person name="Yamada K."/>
            <person name="Fujii Y."/>
            <person name="Ozaki K."/>
            <person name="Hirao M."/>
            <person name="Ohmori Y."/>
            <person name="Kawabata A."/>
            <person name="Hikiji T."/>
            <person name="Kobatake N."/>
            <person name="Inagaki H."/>
            <person name="Ikema Y."/>
            <person name="Okamoto S."/>
            <person name="Okitani R."/>
            <person name="Kawakami T."/>
            <person name="Noguchi S."/>
            <person name="Itoh T."/>
            <person name="Shigeta K."/>
            <person name="Senba T."/>
            <person name="Matsumura K."/>
            <person name="Nakajima Y."/>
            <person name="Mizuno T."/>
            <person name="Morinaga M."/>
            <person name="Sasaki M."/>
            <person name="Togashi T."/>
            <person name="Oyama M."/>
            <person name="Hata H."/>
            <person name="Watanabe M."/>
            <person name="Komatsu T."/>
            <person name="Mizushima-Sugano J."/>
            <person name="Satoh T."/>
            <person name="Shirai Y."/>
            <person name="Takahashi Y."/>
            <person name="Nakagawa K."/>
            <person name="Okumura K."/>
            <person name="Nagase T."/>
            <person name="Nomura N."/>
            <person name="Kikuchi H."/>
            <person name="Masuho Y."/>
            <person name="Yamashita R."/>
            <person name="Nakai K."/>
            <person name="Yada T."/>
            <person name="Nakamura Y."/>
            <person name="Ohara O."/>
            <person name="Isogai T."/>
            <person name="Sugano S."/>
        </authorList>
    </citation>
    <scope>NUCLEOTIDE SEQUENCE [LARGE SCALE MRNA]</scope>
</reference>
<reference key="3">
    <citation type="journal article" date="2004" name="Nature">
        <title>The DNA sequence and comparative analysis of human chromosome 5.</title>
        <authorList>
            <person name="Schmutz J."/>
            <person name="Martin J."/>
            <person name="Terry A."/>
            <person name="Couronne O."/>
            <person name="Grimwood J."/>
            <person name="Lowry S."/>
            <person name="Gordon L.A."/>
            <person name="Scott D."/>
            <person name="Xie G."/>
            <person name="Huang W."/>
            <person name="Hellsten U."/>
            <person name="Tran-Gyamfi M."/>
            <person name="She X."/>
            <person name="Prabhakar S."/>
            <person name="Aerts A."/>
            <person name="Altherr M."/>
            <person name="Bajorek E."/>
            <person name="Black S."/>
            <person name="Branscomb E."/>
            <person name="Caoile C."/>
            <person name="Challacombe J.F."/>
            <person name="Chan Y.M."/>
            <person name="Denys M."/>
            <person name="Detter J.C."/>
            <person name="Escobar J."/>
            <person name="Flowers D."/>
            <person name="Fotopulos D."/>
            <person name="Glavina T."/>
            <person name="Gomez M."/>
            <person name="Gonzales E."/>
            <person name="Goodstein D."/>
            <person name="Grigoriev I."/>
            <person name="Groza M."/>
            <person name="Hammon N."/>
            <person name="Hawkins T."/>
            <person name="Haydu L."/>
            <person name="Israni S."/>
            <person name="Jett J."/>
            <person name="Kadner K."/>
            <person name="Kimball H."/>
            <person name="Kobayashi A."/>
            <person name="Lopez F."/>
            <person name="Lou Y."/>
            <person name="Martinez D."/>
            <person name="Medina C."/>
            <person name="Morgan J."/>
            <person name="Nandkeshwar R."/>
            <person name="Noonan J.P."/>
            <person name="Pitluck S."/>
            <person name="Pollard M."/>
            <person name="Predki P."/>
            <person name="Priest J."/>
            <person name="Ramirez L."/>
            <person name="Retterer J."/>
            <person name="Rodriguez A."/>
            <person name="Rogers S."/>
            <person name="Salamov A."/>
            <person name="Salazar A."/>
            <person name="Thayer N."/>
            <person name="Tice H."/>
            <person name="Tsai M."/>
            <person name="Ustaszewska A."/>
            <person name="Vo N."/>
            <person name="Wheeler J."/>
            <person name="Wu K."/>
            <person name="Yang J."/>
            <person name="Dickson M."/>
            <person name="Cheng J.-F."/>
            <person name="Eichler E.E."/>
            <person name="Olsen A."/>
            <person name="Pennacchio L.A."/>
            <person name="Rokhsar D.S."/>
            <person name="Richardson P."/>
            <person name="Lucas S.M."/>
            <person name="Myers R.M."/>
            <person name="Rubin E.M."/>
        </authorList>
    </citation>
    <scope>NUCLEOTIDE SEQUENCE [LARGE SCALE GENOMIC DNA]</scope>
</reference>
<reference key="4">
    <citation type="submission" date="2005-09" db="EMBL/GenBank/DDBJ databases">
        <authorList>
            <person name="Mural R.J."/>
            <person name="Istrail S."/>
            <person name="Sutton G.G."/>
            <person name="Florea L."/>
            <person name="Halpern A.L."/>
            <person name="Mobarry C.M."/>
            <person name="Lippert R."/>
            <person name="Walenz B."/>
            <person name="Shatkay H."/>
            <person name="Dew I."/>
            <person name="Miller J.R."/>
            <person name="Flanigan M.J."/>
            <person name="Edwards N.J."/>
            <person name="Bolanos R."/>
            <person name="Fasulo D."/>
            <person name="Halldorsson B.V."/>
            <person name="Hannenhalli S."/>
            <person name="Turner R."/>
            <person name="Yooseph S."/>
            <person name="Lu F."/>
            <person name="Nusskern D.R."/>
            <person name="Shue B.C."/>
            <person name="Zheng X.H."/>
            <person name="Zhong F."/>
            <person name="Delcher A.L."/>
            <person name="Huson D.H."/>
            <person name="Kravitz S.A."/>
            <person name="Mouchard L."/>
            <person name="Reinert K."/>
            <person name="Remington K.A."/>
            <person name="Clark A.G."/>
            <person name="Waterman M.S."/>
            <person name="Eichler E.E."/>
            <person name="Adams M.D."/>
            <person name="Hunkapiller M.W."/>
            <person name="Myers E.W."/>
            <person name="Venter J.C."/>
        </authorList>
    </citation>
    <scope>NUCLEOTIDE SEQUENCE [LARGE SCALE GENOMIC DNA]</scope>
</reference>
<reference key="5">
    <citation type="journal article" date="2004" name="Genome Res.">
        <title>The status, quality, and expansion of the NIH full-length cDNA project: the Mammalian Gene Collection (MGC).</title>
        <authorList>
            <consortium name="The MGC Project Team"/>
        </authorList>
    </citation>
    <scope>NUCLEOTIDE SEQUENCE [LARGE SCALE MRNA]</scope>
    <source>
        <tissue>Ovary</tissue>
    </source>
</reference>
<reference key="6">
    <citation type="journal article" date="2009" name="Sci. Signal.">
        <title>Quantitative phosphoproteomic analysis of T cell receptor signaling reveals system-wide modulation of protein-protein interactions.</title>
        <authorList>
            <person name="Mayya V."/>
            <person name="Lundgren D.H."/>
            <person name="Hwang S.-I."/>
            <person name="Rezaul K."/>
            <person name="Wu L."/>
            <person name="Eng J.K."/>
            <person name="Rodionov V."/>
            <person name="Han D.K."/>
        </authorList>
    </citation>
    <scope>PHOSPHORYLATION [LARGE SCALE ANALYSIS] AT SER-146</scope>
    <scope>IDENTIFICATION BY MASS SPECTROMETRY [LARGE SCALE ANALYSIS]</scope>
    <source>
        <tissue>Leukemic T-cell</tissue>
    </source>
</reference>
<reference key="7">
    <citation type="journal article" date="2010" name="Sci. Signal.">
        <title>Quantitative phosphoproteomics reveals widespread full phosphorylation site occupancy during mitosis.</title>
        <authorList>
            <person name="Olsen J.V."/>
            <person name="Vermeulen M."/>
            <person name="Santamaria A."/>
            <person name="Kumar C."/>
            <person name="Miller M.L."/>
            <person name="Jensen L.J."/>
            <person name="Gnad F."/>
            <person name="Cox J."/>
            <person name="Jensen T.S."/>
            <person name="Nigg E.A."/>
            <person name="Brunak S."/>
            <person name="Mann M."/>
        </authorList>
    </citation>
    <scope>IDENTIFICATION BY MASS SPECTROMETRY [LARGE SCALE ANALYSIS]</scope>
    <source>
        <tissue>Cervix carcinoma</tissue>
    </source>
</reference>
<reference key="8">
    <citation type="journal article" date="2011" name="BMC Syst. Biol.">
        <title>Initial characterization of the human central proteome.</title>
        <authorList>
            <person name="Burkard T.R."/>
            <person name="Planyavsky M."/>
            <person name="Kaupe I."/>
            <person name="Breitwieser F.P."/>
            <person name="Buerckstuemmer T."/>
            <person name="Bennett K.L."/>
            <person name="Superti-Furga G."/>
            <person name="Colinge J."/>
        </authorList>
    </citation>
    <scope>IDENTIFICATION BY MASS SPECTROMETRY [LARGE SCALE ANALYSIS]</scope>
</reference>
<reference key="9">
    <citation type="journal article" date="2013" name="J. Proteome Res.">
        <title>Toward a comprehensive characterization of a human cancer cell phosphoproteome.</title>
        <authorList>
            <person name="Zhou H."/>
            <person name="Di Palma S."/>
            <person name="Preisinger C."/>
            <person name="Peng M."/>
            <person name="Polat A.N."/>
            <person name="Heck A.J."/>
            <person name="Mohammed S."/>
        </authorList>
    </citation>
    <scope>PHOSPHORYLATION [LARGE SCALE ANALYSIS] AT SER-87 AND SER-209</scope>
    <scope>IDENTIFICATION BY MASS SPECTROMETRY [LARGE SCALE ANALYSIS]</scope>
    <source>
        <tissue>Erythroleukemia</tissue>
    </source>
</reference>
<reference key="10">
    <citation type="journal article" date="2014" name="J. Proteomics">
        <title>An enzyme assisted RP-RPLC approach for in-depth analysis of human liver phosphoproteome.</title>
        <authorList>
            <person name="Bian Y."/>
            <person name="Song C."/>
            <person name="Cheng K."/>
            <person name="Dong M."/>
            <person name="Wang F."/>
            <person name="Huang J."/>
            <person name="Sun D."/>
            <person name="Wang L."/>
            <person name="Ye M."/>
            <person name="Zou H."/>
        </authorList>
    </citation>
    <scope>PHOSPHORYLATION [LARGE SCALE ANALYSIS] AT SER-209</scope>
    <scope>IDENTIFICATION BY MASS SPECTROMETRY [LARGE SCALE ANALYSIS]</scope>
    <source>
        <tissue>Liver</tissue>
    </source>
</reference>
<evidence type="ECO:0000255" key="1"/>
<evidence type="ECO:0000256" key="2">
    <source>
        <dbReference type="SAM" id="MobiDB-lite"/>
    </source>
</evidence>
<evidence type="ECO:0000305" key="3"/>
<evidence type="ECO:0007744" key="4">
    <source>
    </source>
</evidence>
<evidence type="ECO:0007744" key="5">
    <source>
    </source>
</evidence>
<evidence type="ECO:0007744" key="6">
    <source>
    </source>
</evidence>
<feature type="chain" id="PRO_0000274564" description="Protein FAM114A2">
    <location>
        <begin position="1"/>
        <end position="505"/>
    </location>
</feature>
<feature type="region of interest" description="Disordered" evidence="2">
    <location>
        <begin position="1"/>
        <end position="65"/>
    </location>
</feature>
<feature type="region of interest" description="Disordered" evidence="2">
    <location>
        <begin position="342"/>
        <end position="366"/>
    </location>
</feature>
<feature type="coiled-coil region" evidence="1">
    <location>
        <begin position="268"/>
        <end position="295"/>
    </location>
</feature>
<feature type="compositionally biased region" description="Basic and acidic residues" evidence="2">
    <location>
        <begin position="51"/>
        <end position="63"/>
    </location>
</feature>
<feature type="modified residue" description="Phosphoserine" evidence="5">
    <location>
        <position position="87"/>
    </location>
</feature>
<feature type="modified residue" description="Phosphoserine" evidence="4">
    <location>
        <position position="146"/>
    </location>
</feature>
<feature type="modified residue" description="Phosphoserine" evidence="5 6">
    <location>
        <position position="209"/>
    </location>
</feature>
<feature type="sequence conflict" description="In Ref. 1; AAF76523." evidence="3" ref="1">
    <original>P</original>
    <variation>S</variation>
    <location>
        <position position="68"/>
    </location>
</feature>
<feature type="sequence conflict" description="In Ref. 1; AAF76523, 2; BAB14952 and 5; AAH11414." evidence="3" ref="1 2 5">
    <original>G</original>
    <variation>S</variation>
    <location>
        <position position="122"/>
    </location>
</feature>
<keyword id="KW-0175">Coiled coil</keyword>
<keyword id="KW-0597">Phosphoprotein</keyword>
<keyword id="KW-1267">Proteomics identification</keyword>
<keyword id="KW-1185">Reference proteome</keyword>
<organism>
    <name type="scientific">Homo sapiens</name>
    <name type="common">Human</name>
    <dbReference type="NCBI Taxonomy" id="9606"/>
    <lineage>
        <taxon>Eukaryota</taxon>
        <taxon>Metazoa</taxon>
        <taxon>Chordata</taxon>
        <taxon>Craniata</taxon>
        <taxon>Vertebrata</taxon>
        <taxon>Euteleostomi</taxon>
        <taxon>Mammalia</taxon>
        <taxon>Eutheria</taxon>
        <taxon>Euarchontoglires</taxon>
        <taxon>Primates</taxon>
        <taxon>Haplorrhini</taxon>
        <taxon>Catarrhini</taxon>
        <taxon>Hominidae</taxon>
        <taxon>Homo</taxon>
    </lineage>
</organism>
<gene>
    <name type="primary">FAM114A2</name>
    <name type="synonym">C5orf3</name>
</gene>
<accession>Q9NRY5</accession>
<accession>B2R8D8</accession>
<accession>Q9H7E0</accession>
<comment type="interaction">
    <interactant intactId="EBI-10973142">
        <id>Q9NRY5</id>
    </interactant>
    <interactant intactId="EBI-9304251">
        <id>Q05329</id>
        <label>GAD2</label>
    </interactant>
    <organismsDiffer>false</organismsDiffer>
    <experiments>3</experiments>
</comment>
<comment type="interaction">
    <interactant intactId="EBI-10973142">
        <id>Q9NRY5</id>
    </interactant>
    <interactant intactId="EBI-3910993">
        <id>P43629</id>
        <label>KIR3DL1</label>
    </interactant>
    <organismsDiffer>false</organismsDiffer>
    <experiments>2</experiments>
</comment>
<comment type="interaction">
    <interactant intactId="EBI-10973142">
        <id>Q9NRY5</id>
    </interactant>
    <interactant intactId="EBI-11988931">
        <id>Q96C03-3</id>
        <label>MIEF2</label>
    </interactant>
    <organismsDiffer>false</organismsDiffer>
    <experiments>3</experiments>
</comment>
<comment type="interaction">
    <interactant intactId="EBI-10973142">
        <id>Q9NRY5</id>
    </interactant>
    <interactant intactId="EBI-713665">
        <id>P19404</id>
        <label>NDUFV2</label>
    </interactant>
    <organismsDiffer>false</organismsDiffer>
    <experiments>3</experiments>
</comment>
<comment type="interaction">
    <interactant intactId="EBI-10973142">
        <id>Q9NRY5</id>
    </interactant>
    <interactant intactId="EBI-12117156">
        <id>C9JJ79</id>
        <label>PILRA</label>
    </interactant>
    <organismsDiffer>false</organismsDiffer>
    <experiments>3</experiments>
</comment>
<comment type="interaction">
    <interactant intactId="EBI-10973142">
        <id>Q9NRY5</id>
    </interactant>
    <interactant intactId="EBI-742898">
        <id>P43378</id>
        <label>PTPN9</label>
    </interactant>
    <organismsDiffer>false</organismsDiffer>
    <experiments>3</experiments>
</comment>
<comment type="interaction">
    <interactant intactId="EBI-10973142">
        <id>Q9NRY5</id>
    </interactant>
    <interactant intactId="EBI-752037">
        <id>P61019</id>
        <label>RAB2A</label>
    </interactant>
    <organismsDiffer>false</organismsDiffer>
    <experiments>3</experiments>
</comment>
<comment type="interaction">
    <interactant intactId="EBI-10973142">
        <id>Q9NRY5</id>
    </interactant>
    <interactant intactId="EBI-5542466">
        <id>Q8WUD1</id>
        <label>RAB2B</label>
    </interactant>
    <organismsDiffer>false</organismsDiffer>
    <experiments>3</experiments>
</comment>
<comment type="interaction">
    <interactant intactId="EBI-10973142">
        <id>Q9NRY5</id>
    </interactant>
    <interactant intactId="EBI-2623095">
        <id>Q9Y371</id>
        <label>SH3GLB1</label>
    </interactant>
    <organismsDiffer>false</organismsDiffer>
    <experiments>3</experiments>
</comment>
<comment type="interaction">
    <interactant intactId="EBI-10973142">
        <id>Q9NRY5</id>
    </interactant>
    <interactant intactId="EBI-702328">
        <id>Q969Z0</id>
        <label>TBRG4</label>
    </interactant>
    <organismsDiffer>false</organismsDiffer>
    <experiments>4</experiments>
</comment>
<comment type="interaction">
    <interactant intactId="EBI-10973142">
        <id>Q9NRY5</id>
    </interactant>
    <interactant intactId="EBI-10210710">
        <id>P49638</id>
        <label>TTPA</label>
    </interactant>
    <organismsDiffer>false</organismsDiffer>
    <experiments>3</experiments>
</comment>
<comment type="similarity">
    <text evidence="3">Belongs to the FAM114 family.</text>
</comment>